<reference key="1">
    <citation type="journal article" date="2005" name="PLoS Biol.">
        <title>The genomes of Oryza sativa: a history of duplications.</title>
        <authorList>
            <person name="Yu J."/>
            <person name="Wang J."/>
            <person name="Lin W."/>
            <person name="Li S."/>
            <person name="Li H."/>
            <person name="Zhou J."/>
            <person name="Ni P."/>
            <person name="Dong W."/>
            <person name="Hu S."/>
            <person name="Zeng C."/>
            <person name="Zhang J."/>
            <person name="Zhang Y."/>
            <person name="Li R."/>
            <person name="Xu Z."/>
            <person name="Li S."/>
            <person name="Li X."/>
            <person name="Zheng H."/>
            <person name="Cong L."/>
            <person name="Lin L."/>
            <person name="Yin J."/>
            <person name="Geng J."/>
            <person name="Li G."/>
            <person name="Shi J."/>
            <person name="Liu J."/>
            <person name="Lv H."/>
            <person name="Li J."/>
            <person name="Wang J."/>
            <person name="Deng Y."/>
            <person name="Ran L."/>
            <person name="Shi X."/>
            <person name="Wang X."/>
            <person name="Wu Q."/>
            <person name="Li C."/>
            <person name="Ren X."/>
            <person name="Wang J."/>
            <person name="Wang X."/>
            <person name="Li D."/>
            <person name="Liu D."/>
            <person name="Zhang X."/>
            <person name="Ji Z."/>
            <person name="Zhao W."/>
            <person name="Sun Y."/>
            <person name="Zhang Z."/>
            <person name="Bao J."/>
            <person name="Han Y."/>
            <person name="Dong L."/>
            <person name="Ji J."/>
            <person name="Chen P."/>
            <person name="Wu S."/>
            <person name="Liu J."/>
            <person name="Xiao Y."/>
            <person name="Bu D."/>
            <person name="Tan J."/>
            <person name="Yang L."/>
            <person name="Ye C."/>
            <person name="Zhang J."/>
            <person name="Xu J."/>
            <person name="Zhou Y."/>
            <person name="Yu Y."/>
            <person name="Zhang B."/>
            <person name="Zhuang S."/>
            <person name="Wei H."/>
            <person name="Liu B."/>
            <person name="Lei M."/>
            <person name="Yu H."/>
            <person name="Li Y."/>
            <person name="Xu H."/>
            <person name="Wei S."/>
            <person name="He X."/>
            <person name="Fang L."/>
            <person name="Zhang Z."/>
            <person name="Zhang Y."/>
            <person name="Huang X."/>
            <person name="Su Z."/>
            <person name="Tong W."/>
            <person name="Li J."/>
            <person name="Tong Z."/>
            <person name="Li S."/>
            <person name="Ye J."/>
            <person name="Wang L."/>
            <person name="Fang L."/>
            <person name="Lei T."/>
            <person name="Chen C.-S."/>
            <person name="Chen H.-C."/>
            <person name="Xu Z."/>
            <person name="Li H."/>
            <person name="Huang H."/>
            <person name="Zhang F."/>
            <person name="Xu H."/>
            <person name="Li N."/>
            <person name="Zhao C."/>
            <person name="Li S."/>
            <person name="Dong L."/>
            <person name="Huang Y."/>
            <person name="Li L."/>
            <person name="Xi Y."/>
            <person name="Qi Q."/>
            <person name="Li W."/>
            <person name="Zhang B."/>
            <person name="Hu W."/>
            <person name="Zhang Y."/>
            <person name="Tian X."/>
            <person name="Jiao Y."/>
            <person name="Liang X."/>
            <person name="Jin J."/>
            <person name="Gao L."/>
            <person name="Zheng W."/>
            <person name="Hao B."/>
            <person name="Liu S.-M."/>
            <person name="Wang W."/>
            <person name="Yuan L."/>
            <person name="Cao M."/>
            <person name="McDermott J."/>
            <person name="Samudrala R."/>
            <person name="Wang J."/>
            <person name="Wong G.K.-S."/>
            <person name="Yang H."/>
        </authorList>
    </citation>
    <scope>NUCLEOTIDE SEQUENCE [LARGE SCALE GENOMIC DNA]</scope>
    <source>
        <strain>cv. 93-11</strain>
    </source>
</reference>
<organism>
    <name type="scientific">Oryza sativa subsp. indica</name>
    <name type="common">Rice</name>
    <dbReference type="NCBI Taxonomy" id="39946"/>
    <lineage>
        <taxon>Eukaryota</taxon>
        <taxon>Viridiplantae</taxon>
        <taxon>Streptophyta</taxon>
        <taxon>Embryophyta</taxon>
        <taxon>Tracheophyta</taxon>
        <taxon>Spermatophyta</taxon>
        <taxon>Magnoliopsida</taxon>
        <taxon>Liliopsida</taxon>
        <taxon>Poales</taxon>
        <taxon>Poaceae</taxon>
        <taxon>BOP clade</taxon>
        <taxon>Oryzoideae</taxon>
        <taxon>Oryzeae</taxon>
        <taxon>Oryzinae</taxon>
        <taxon>Oryza</taxon>
        <taxon>Oryza sativa</taxon>
    </lineage>
</organism>
<feature type="chain" id="PRO_0000434835" description="GATA transcription factor 18">
    <location>
        <begin position="1"/>
        <end position="319"/>
    </location>
</feature>
<feature type="domain" description="Tify" evidence="4">
    <location>
        <begin position="74"/>
        <end position="109"/>
    </location>
</feature>
<feature type="domain" description="CCT" evidence="3">
    <location>
        <begin position="143"/>
        <end position="185"/>
    </location>
</feature>
<feature type="zinc finger region" description="GATA-type" evidence="2">
    <location>
        <begin position="215"/>
        <end position="242"/>
    </location>
</feature>
<feature type="region of interest" description="Disordered" evidence="5">
    <location>
        <begin position="1"/>
        <end position="74"/>
    </location>
</feature>
<feature type="region of interest" description="Disordered" evidence="5">
    <location>
        <begin position="292"/>
        <end position="319"/>
    </location>
</feature>
<feature type="compositionally biased region" description="Low complexity" evidence="5">
    <location>
        <begin position="1"/>
        <end position="15"/>
    </location>
</feature>
<feature type="compositionally biased region" description="Acidic residues" evidence="5">
    <location>
        <begin position="32"/>
        <end position="60"/>
    </location>
</feature>
<accession>A2XKR7</accession>
<name>GAT18_ORYSI</name>
<sequence>MPDAAAAAAAAQDADAVMRDAPADAAAGGGDNNDDDGDDGTEEDEEEDDDEEGDEEELPPAEDPAAPEPVSALLPGSPNQLTLLFQGEVYVFESVTPEKVQAVLLLLGSCEMPPGLANMVLPNQRENRGYDDLLQRTDIPAKRVASLIRFREKRKERNFDKKIRYAVRKEVALRMQRRKGQFAGRANMEGESLSPGCELASQGSGQDFLSRESKCQNCGTSEKMTPAMRRGPAGPRTLCNACGLMWANKGTLRNCPKAKVESSVVATEQSNAAVSPSGIDNKELVVPNPENITASHGEVMGDSTPANEAEIGAPKAQSQ</sequence>
<comment type="function">
    <text evidence="1">Transcriptional activator that specifically binds 5'-GATA-3' or 5'-GAT-3' motifs within gene promoters.</text>
</comment>
<comment type="subcellular location">
    <subcellularLocation>
        <location evidence="3">Nucleus</location>
    </subcellularLocation>
</comment>
<comment type="similarity">
    <text evidence="6">Belongs to the type IV zinc-finger family. Class C subfamily.</text>
</comment>
<dbReference type="EMBL" id="CM000128">
    <property type="protein sequence ID" value="EAY91427.1"/>
    <property type="molecule type" value="Genomic_DNA"/>
</dbReference>
<dbReference type="SMR" id="A2XKR7"/>
<dbReference type="STRING" id="39946.A2XKR7"/>
<dbReference type="EnsemblPlants" id="BGIOSGA010036-TA">
    <property type="protein sequence ID" value="BGIOSGA010036-PA"/>
    <property type="gene ID" value="BGIOSGA010036"/>
</dbReference>
<dbReference type="EnsemblPlants" id="OsGoSa_03g0029950.01">
    <property type="protein sequence ID" value="OsGoSa_03g0029950.01"/>
    <property type="gene ID" value="OsGoSa_03g0029950"/>
</dbReference>
<dbReference type="EnsemblPlants" id="OsIR64_03g0029600.01">
    <property type="protein sequence ID" value="OsIR64_03g0029600.01"/>
    <property type="gene ID" value="OsIR64_03g0029600"/>
</dbReference>
<dbReference type="EnsemblPlants" id="OsKYG_03g0029990.01">
    <property type="protein sequence ID" value="OsKYG_03g0029990.01"/>
    <property type="gene ID" value="OsKYG_03g0029990"/>
</dbReference>
<dbReference type="EnsemblPlants" id="OsLaMu_03g0029720.01">
    <property type="protein sequence ID" value="OsLaMu_03g0029720.01"/>
    <property type="gene ID" value="OsLaMu_03g0029720"/>
</dbReference>
<dbReference type="EnsemblPlants" id="OsLima_03g0029930.01">
    <property type="protein sequence ID" value="OsLima_03g0029930.01"/>
    <property type="gene ID" value="OsLima_03g0029930"/>
</dbReference>
<dbReference type="EnsemblPlants" id="OsLiXu_03g0029770.01">
    <property type="protein sequence ID" value="OsLiXu_03g0029770.01"/>
    <property type="gene ID" value="OsLiXu_03g0029770"/>
</dbReference>
<dbReference type="EnsemblPlants" id="OsPr106_03g0029880.01">
    <property type="protein sequence ID" value="OsPr106_03g0029880.01"/>
    <property type="gene ID" value="OsPr106_03g0029880"/>
</dbReference>
<dbReference type="EnsemblPlants" id="OsZS97_03G029850_01">
    <property type="protein sequence ID" value="OsZS97_03G029850_01"/>
    <property type="gene ID" value="OsZS97_03G029850"/>
</dbReference>
<dbReference type="Gramene" id="BGIOSGA010036-TA">
    <property type="protein sequence ID" value="BGIOSGA010036-PA"/>
    <property type="gene ID" value="BGIOSGA010036"/>
</dbReference>
<dbReference type="Gramene" id="OsGoSa_03g0029950.01">
    <property type="protein sequence ID" value="OsGoSa_03g0029950.01"/>
    <property type="gene ID" value="OsGoSa_03g0029950"/>
</dbReference>
<dbReference type="Gramene" id="OsIR64_03g0029600.01">
    <property type="protein sequence ID" value="OsIR64_03g0029600.01"/>
    <property type="gene ID" value="OsIR64_03g0029600"/>
</dbReference>
<dbReference type="Gramene" id="OsKYG_03g0029990.01">
    <property type="protein sequence ID" value="OsKYG_03g0029990.01"/>
    <property type="gene ID" value="OsKYG_03g0029990"/>
</dbReference>
<dbReference type="Gramene" id="OsLaMu_03g0029720.01">
    <property type="protein sequence ID" value="OsLaMu_03g0029720.01"/>
    <property type="gene ID" value="OsLaMu_03g0029720"/>
</dbReference>
<dbReference type="Gramene" id="OsLima_03g0029930.01">
    <property type="protein sequence ID" value="OsLima_03g0029930.01"/>
    <property type="gene ID" value="OsLima_03g0029930"/>
</dbReference>
<dbReference type="Gramene" id="OsLiXu_03g0029770.01">
    <property type="protein sequence ID" value="OsLiXu_03g0029770.01"/>
    <property type="gene ID" value="OsLiXu_03g0029770"/>
</dbReference>
<dbReference type="Gramene" id="OsPr106_03g0029880.01">
    <property type="protein sequence ID" value="OsPr106_03g0029880.01"/>
    <property type="gene ID" value="OsPr106_03g0029880"/>
</dbReference>
<dbReference type="Gramene" id="OsZS97_03G029850_01">
    <property type="protein sequence ID" value="OsZS97_03G029850_01"/>
    <property type="gene ID" value="OsZS97_03G029850"/>
</dbReference>
<dbReference type="HOGENOM" id="CLU_057264_1_2_1"/>
<dbReference type="OMA" id="QHENRGY"/>
<dbReference type="OrthoDB" id="2162994at2759"/>
<dbReference type="Proteomes" id="UP000007015">
    <property type="component" value="Chromosome 3"/>
</dbReference>
<dbReference type="GO" id="GO:0005634">
    <property type="term" value="C:nucleus"/>
    <property type="evidence" value="ECO:0007669"/>
    <property type="project" value="UniProtKB-SubCell"/>
</dbReference>
<dbReference type="GO" id="GO:0043565">
    <property type="term" value="F:sequence-specific DNA binding"/>
    <property type="evidence" value="ECO:0007669"/>
    <property type="project" value="InterPro"/>
</dbReference>
<dbReference type="GO" id="GO:0008270">
    <property type="term" value="F:zinc ion binding"/>
    <property type="evidence" value="ECO:0007669"/>
    <property type="project" value="UniProtKB-KW"/>
</dbReference>
<dbReference type="GO" id="GO:0006355">
    <property type="term" value="P:regulation of DNA-templated transcription"/>
    <property type="evidence" value="ECO:0007669"/>
    <property type="project" value="InterPro"/>
</dbReference>
<dbReference type="CDD" id="cd00202">
    <property type="entry name" value="ZnF_GATA"/>
    <property type="match status" value="1"/>
</dbReference>
<dbReference type="Gene3D" id="3.30.50.10">
    <property type="entry name" value="Erythroid Transcription Factor GATA-1, subunit A"/>
    <property type="match status" value="1"/>
</dbReference>
<dbReference type="InterPro" id="IPR010402">
    <property type="entry name" value="CCT_domain"/>
</dbReference>
<dbReference type="InterPro" id="IPR045280">
    <property type="entry name" value="TIFY-like"/>
</dbReference>
<dbReference type="InterPro" id="IPR010399">
    <property type="entry name" value="Tify_dom"/>
</dbReference>
<dbReference type="InterPro" id="IPR000679">
    <property type="entry name" value="Znf_GATA"/>
</dbReference>
<dbReference type="InterPro" id="IPR013088">
    <property type="entry name" value="Znf_NHR/GATA"/>
</dbReference>
<dbReference type="PANTHER" id="PTHR46125:SF24">
    <property type="entry name" value="GATA TRANSCRIPTION FACTOR 18"/>
    <property type="match status" value="1"/>
</dbReference>
<dbReference type="PANTHER" id="PTHR46125">
    <property type="entry name" value="GATA TRANSCRIPTION FACTOR 28"/>
    <property type="match status" value="1"/>
</dbReference>
<dbReference type="Pfam" id="PF06203">
    <property type="entry name" value="CCT"/>
    <property type="match status" value="1"/>
</dbReference>
<dbReference type="Pfam" id="PF00320">
    <property type="entry name" value="GATA"/>
    <property type="match status" value="1"/>
</dbReference>
<dbReference type="Pfam" id="PF06200">
    <property type="entry name" value="tify"/>
    <property type="match status" value="1"/>
</dbReference>
<dbReference type="SMART" id="SM00979">
    <property type="entry name" value="TIFY"/>
    <property type="match status" value="1"/>
</dbReference>
<dbReference type="SMART" id="SM00401">
    <property type="entry name" value="ZnF_GATA"/>
    <property type="match status" value="1"/>
</dbReference>
<dbReference type="SUPFAM" id="SSF57716">
    <property type="entry name" value="Glucocorticoid receptor-like (DNA-binding domain)"/>
    <property type="match status" value="1"/>
</dbReference>
<dbReference type="PROSITE" id="PS51017">
    <property type="entry name" value="CCT"/>
    <property type="match status" value="1"/>
</dbReference>
<dbReference type="PROSITE" id="PS00344">
    <property type="entry name" value="GATA_ZN_FINGER_1"/>
    <property type="match status" value="1"/>
</dbReference>
<dbReference type="PROSITE" id="PS50114">
    <property type="entry name" value="GATA_ZN_FINGER_2"/>
    <property type="match status" value="1"/>
</dbReference>
<dbReference type="PROSITE" id="PS51320">
    <property type="entry name" value="TIFY"/>
    <property type="match status" value="1"/>
</dbReference>
<gene>
    <name evidence="6" type="primary">GATA18</name>
    <name evidence="6" type="synonym">TIFY1A</name>
    <name evidence="7" type="ORF">OsI_13054</name>
</gene>
<protein>
    <recommendedName>
        <fullName evidence="6">GATA transcription factor 18</fullName>
    </recommendedName>
    <alternativeName>
        <fullName evidence="6">Protein TIFY 1a</fullName>
    </alternativeName>
</protein>
<keyword id="KW-0010">Activator</keyword>
<keyword id="KW-0238">DNA-binding</keyword>
<keyword id="KW-0479">Metal-binding</keyword>
<keyword id="KW-0539">Nucleus</keyword>
<keyword id="KW-1185">Reference proteome</keyword>
<keyword id="KW-0804">Transcription</keyword>
<keyword id="KW-0805">Transcription regulation</keyword>
<keyword id="KW-0862">Zinc</keyword>
<keyword id="KW-0863">Zinc-finger</keyword>
<evidence type="ECO:0000250" key="1">
    <source>
        <dbReference type="UniProtKB" id="Q8LAU9"/>
    </source>
</evidence>
<evidence type="ECO:0000255" key="2">
    <source>
        <dbReference type="PROSITE-ProRule" id="PRU00094"/>
    </source>
</evidence>
<evidence type="ECO:0000255" key="3">
    <source>
        <dbReference type="PROSITE-ProRule" id="PRU00357"/>
    </source>
</evidence>
<evidence type="ECO:0000255" key="4">
    <source>
        <dbReference type="PROSITE-ProRule" id="PRU00650"/>
    </source>
</evidence>
<evidence type="ECO:0000256" key="5">
    <source>
        <dbReference type="SAM" id="MobiDB-lite"/>
    </source>
</evidence>
<evidence type="ECO:0000305" key="6"/>
<evidence type="ECO:0000312" key="7">
    <source>
        <dbReference type="EMBL" id="EAY91427.1"/>
    </source>
</evidence>
<proteinExistence type="inferred from homology"/>